<reference key="1">
    <citation type="journal article" date="1993" name="Neuron">
        <title>The alpha component of the CNTF receptor is required for signaling and defines potential CNTF targets in the adult and during development.</title>
        <authorList>
            <person name="Ip N.Y."/>
            <person name="McClain J."/>
            <person name="Barrezueta N.X."/>
            <person name="Aldrich T.H."/>
            <person name="Pan L."/>
            <person name="Li Y."/>
            <person name="Wiegand S.J."/>
            <person name="Friedman B."/>
            <person name="Davis S."/>
            <person name="Yancopoulos G.D."/>
        </authorList>
    </citation>
    <scope>NUCLEOTIDE SEQUENCE [MRNA]</scope>
    <source>
        <tissue>Brain</tissue>
    </source>
</reference>
<reference key="2">
    <citation type="journal article" date="1993" name="Proc. Natl. Acad. Sci. U.S.A.">
        <title>Ciliary neurotrophic factor prevents retrograde neuronal death in the adult central nervous system.</title>
        <authorList>
            <person name="Clatterbuck R.E."/>
            <person name="Price D.L."/>
            <person name="Koliatsos V.E."/>
        </authorList>
    </citation>
    <scope>NUCLEOTIDE SEQUENCE [MRNA] OF 185-277</scope>
    <source>
        <strain>Sprague-Dawley</strain>
        <tissue>Brain</tissue>
    </source>
</reference>
<proteinExistence type="evidence at transcript level"/>
<protein>
    <recommendedName>
        <fullName>Ciliary neurotrophic factor receptor subunit alpha</fullName>
        <shortName>CNTF receptor subunit alpha</shortName>
        <shortName>CNTFR-alpha</shortName>
    </recommendedName>
</protein>
<sequence length="372" mass="40822">MAASVPWACCAVLAAAAAAVYTQKHSPQEAPHVQYERLGTDVTLPCGTASWDAAVTWRVNGTDLAPDLLNGSQLILRSLELGHSGLYACFHRDSWHLRHQVLLHVGLPPREPVLSCRSNTYPKGFYCSWHLSAPTYIPNTFNVTVLHGSKMMVCEKDPALKNRCHIRYMHLFSTIKYKVSISVSNALGHNTTAITFDEFTIVKPDPPENVVARPVPSNPRRLEVTWQTPSTWPDPESFPLKFFLRYRPLILDQWQHVELSNGTAHTITDAYAGKEYIIQVAAKDNEIGTWSDWSVAAHATPWTEEPRHLTTEAQAPETTTSTTSSLAPPPTTKICDPGELSSGGGPSIPFLTSVPVTLVLAAAAATANNLLI</sequence>
<comment type="function">
    <text>Binds to CNTF. The alpha subunit provides the receptor specificity.</text>
</comment>
<comment type="subunit">
    <text evidence="1">Forms a heterotrimer with LIFR and IL6ST. Interacts with heterodimeric neurotropic cytokine composed of CLCF1/CLC and CRLF1/CLF-1. Either alone or in complex with the heterodimer CLCF1-CRLF1 interacts with SORL1; this interaction may promote internalization and lysosomal degradation.</text>
</comment>
<comment type="subcellular location">
    <subcellularLocation>
        <location>Cell membrane</location>
        <topology>Lipid-anchor</topology>
        <topology>GPI-anchor</topology>
    </subcellularLocation>
</comment>
<comment type="tissue specificity">
    <text>Nervous system.</text>
</comment>
<comment type="domain">
    <text>The WSXWS motif appears to be necessary for proper protein folding and thereby efficient intracellular transport and cell-surface receptor binding.</text>
</comment>
<comment type="similarity">
    <text evidence="6">Belongs to the type I cytokine receptor family. Type 3 subfamily.</text>
</comment>
<organism>
    <name type="scientific">Rattus norvegicus</name>
    <name type="common">Rat</name>
    <dbReference type="NCBI Taxonomy" id="10116"/>
    <lineage>
        <taxon>Eukaryota</taxon>
        <taxon>Metazoa</taxon>
        <taxon>Chordata</taxon>
        <taxon>Craniata</taxon>
        <taxon>Vertebrata</taxon>
        <taxon>Euteleostomi</taxon>
        <taxon>Mammalia</taxon>
        <taxon>Eutheria</taxon>
        <taxon>Euarchontoglires</taxon>
        <taxon>Glires</taxon>
        <taxon>Rodentia</taxon>
        <taxon>Myomorpha</taxon>
        <taxon>Muroidea</taxon>
        <taxon>Muridae</taxon>
        <taxon>Murinae</taxon>
        <taxon>Rattus</taxon>
    </lineage>
</organism>
<dbReference type="EMBL" id="S54212">
    <property type="protein sequence ID" value="AAB25290.1"/>
    <property type="molecule type" value="mRNA"/>
</dbReference>
<dbReference type="EMBL" id="S57711">
    <property type="protein sequence ID" value="AAB25918.1"/>
    <property type="molecule type" value="mRNA"/>
</dbReference>
<dbReference type="PIR" id="I58141">
    <property type="entry name" value="I58141"/>
</dbReference>
<dbReference type="RefSeq" id="NP_001003929.1">
    <property type="nucleotide sequence ID" value="NM_001003929.1"/>
</dbReference>
<dbReference type="BMRB" id="Q08406"/>
<dbReference type="SMR" id="Q08406"/>
<dbReference type="BioGRID" id="260344">
    <property type="interactions" value="2"/>
</dbReference>
<dbReference type="FunCoup" id="Q08406">
    <property type="interactions" value="1028"/>
</dbReference>
<dbReference type="IntAct" id="Q08406">
    <property type="interactions" value="2"/>
</dbReference>
<dbReference type="STRING" id="10116.ENSRNOP00000066185"/>
<dbReference type="GlyCosmos" id="Q08406">
    <property type="glycosylation" value="5 sites, No reported glycans"/>
</dbReference>
<dbReference type="GlyGen" id="Q08406">
    <property type="glycosylation" value="5 sites"/>
</dbReference>
<dbReference type="PhosphoSitePlus" id="Q08406"/>
<dbReference type="SwissPalm" id="Q08406"/>
<dbReference type="PaxDb" id="10116-ENSRNOP00000066185"/>
<dbReference type="GeneID" id="313173"/>
<dbReference type="KEGG" id="rno:313173"/>
<dbReference type="AGR" id="RGD:1303100"/>
<dbReference type="CTD" id="1271"/>
<dbReference type="RGD" id="1303100">
    <property type="gene designation" value="Cntfr"/>
</dbReference>
<dbReference type="eggNOG" id="ENOG502QUDK">
    <property type="taxonomic scope" value="Eukaryota"/>
</dbReference>
<dbReference type="InParanoid" id="Q08406"/>
<dbReference type="OrthoDB" id="9927622at2759"/>
<dbReference type="PhylomeDB" id="Q08406"/>
<dbReference type="Reactome" id="R-RNO-6788467">
    <property type="pathway name" value="IL-6-type cytokine receptor ligand interactions"/>
</dbReference>
<dbReference type="PRO" id="PR:Q08406"/>
<dbReference type="Proteomes" id="UP000002494">
    <property type="component" value="Unplaced"/>
</dbReference>
<dbReference type="GO" id="GO:0016324">
    <property type="term" value="C:apical plasma membrane"/>
    <property type="evidence" value="ECO:0000266"/>
    <property type="project" value="RGD"/>
</dbReference>
<dbReference type="GO" id="GO:0070110">
    <property type="term" value="C:ciliary neurotrophic factor receptor complex"/>
    <property type="evidence" value="ECO:0000266"/>
    <property type="project" value="RGD"/>
</dbReference>
<dbReference type="GO" id="GO:0097059">
    <property type="term" value="C:CNTFR-CLCF1 complex"/>
    <property type="evidence" value="ECO:0000266"/>
    <property type="project" value="RGD"/>
</dbReference>
<dbReference type="GO" id="GO:0009897">
    <property type="term" value="C:external side of plasma membrane"/>
    <property type="evidence" value="ECO:0000318"/>
    <property type="project" value="GO_Central"/>
</dbReference>
<dbReference type="GO" id="GO:0004897">
    <property type="term" value="F:ciliary neurotrophic factor receptor activity"/>
    <property type="evidence" value="ECO:0000315"/>
    <property type="project" value="RGD"/>
</dbReference>
<dbReference type="GO" id="GO:0019955">
    <property type="term" value="F:cytokine binding"/>
    <property type="evidence" value="ECO:0000353"/>
    <property type="project" value="RGD"/>
</dbReference>
<dbReference type="GO" id="GO:0019970">
    <property type="term" value="F:interleukin-11 binding"/>
    <property type="evidence" value="ECO:0000318"/>
    <property type="project" value="GO_Central"/>
</dbReference>
<dbReference type="GO" id="GO:0004921">
    <property type="term" value="F:interleukin-11 receptor activity"/>
    <property type="evidence" value="ECO:0000318"/>
    <property type="project" value="GO_Central"/>
</dbReference>
<dbReference type="GO" id="GO:0005102">
    <property type="term" value="F:signaling receptor binding"/>
    <property type="evidence" value="ECO:0000266"/>
    <property type="project" value="RGD"/>
</dbReference>
<dbReference type="GO" id="GO:0003360">
    <property type="term" value="P:brainstem development"/>
    <property type="evidence" value="ECO:0000266"/>
    <property type="project" value="RGD"/>
</dbReference>
<dbReference type="GO" id="GO:0070120">
    <property type="term" value="P:ciliary neurotrophic factor-mediated signaling pathway"/>
    <property type="evidence" value="ECO:0000266"/>
    <property type="project" value="RGD"/>
</dbReference>
<dbReference type="GO" id="GO:0097049">
    <property type="term" value="P:motor neuron apoptotic process"/>
    <property type="evidence" value="ECO:0000266"/>
    <property type="project" value="RGD"/>
</dbReference>
<dbReference type="GO" id="GO:2000672">
    <property type="term" value="P:negative regulation of motor neuron apoptotic process"/>
    <property type="evidence" value="ECO:0000266"/>
    <property type="project" value="RGD"/>
</dbReference>
<dbReference type="GO" id="GO:0043524">
    <property type="term" value="P:negative regulation of neuron apoptotic process"/>
    <property type="evidence" value="ECO:0000266"/>
    <property type="project" value="RGD"/>
</dbReference>
<dbReference type="GO" id="GO:0008284">
    <property type="term" value="P:positive regulation of cell population proliferation"/>
    <property type="evidence" value="ECO:0000266"/>
    <property type="project" value="RGD"/>
</dbReference>
<dbReference type="GO" id="GO:0007548">
    <property type="term" value="P:sex differentiation"/>
    <property type="evidence" value="ECO:0000266"/>
    <property type="project" value="RGD"/>
</dbReference>
<dbReference type="GO" id="GO:0060538">
    <property type="term" value="P:skeletal muscle organ development"/>
    <property type="evidence" value="ECO:0000266"/>
    <property type="project" value="RGD"/>
</dbReference>
<dbReference type="GO" id="GO:0001967">
    <property type="term" value="P:suckling behavior"/>
    <property type="evidence" value="ECO:0000266"/>
    <property type="project" value="RGD"/>
</dbReference>
<dbReference type="CDD" id="cd00063">
    <property type="entry name" value="FN3"/>
    <property type="match status" value="1"/>
</dbReference>
<dbReference type="FunFam" id="2.60.40.10:FF:000136">
    <property type="entry name" value="Ciliary neurotrophic factor receptor alpha"/>
    <property type="match status" value="1"/>
</dbReference>
<dbReference type="FunFam" id="2.60.40.10:FF:000564">
    <property type="entry name" value="Ciliary neurotrophic factor receptor subunit alpha"/>
    <property type="match status" value="1"/>
</dbReference>
<dbReference type="FunFam" id="2.60.40.10:FF:000944">
    <property type="entry name" value="Ciliary neurotrophic factor receptor subunit alpha"/>
    <property type="match status" value="1"/>
</dbReference>
<dbReference type="Gene3D" id="2.60.40.10">
    <property type="entry name" value="Immunoglobulins"/>
    <property type="match status" value="3"/>
</dbReference>
<dbReference type="InterPro" id="IPR003961">
    <property type="entry name" value="FN3_dom"/>
</dbReference>
<dbReference type="InterPro" id="IPR036116">
    <property type="entry name" value="FN3_sf"/>
</dbReference>
<dbReference type="InterPro" id="IPR003530">
    <property type="entry name" value="Hematopoietin_rcpt_L_F3_CS"/>
</dbReference>
<dbReference type="InterPro" id="IPR007110">
    <property type="entry name" value="Ig-like_dom"/>
</dbReference>
<dbReference type="InterPro" id="IPR036179">
    <property type="entry name" value="Ig-like_dom_sf"/>
</dbReference>
<dbReference type="InterPro" id="IPR013783">
    <property type="entry name" value="Ig-like_fold"/>
</dbReference>
<dbReference type="InterPro" id="IPR003599">
    <property type="entry name" value="Ig_sub"/>
</dbReference>
<dbReference type="InterPro" id="IPR003598">
    <property type="entry name" value="Ig_sub2"/>
</dbReference>
<dbReference type="InterPro" id="IPR050379">
    <property type="entry name" value="Type-I_Cytokine_Rcpt"/>
</dbReference>
<dbReference type="PANTHER" id="PTHR23036:SF21">
    <property type="entry name" value="CILIARY NEUROTROPHIC FACTOR RECEPTOR SUBUNIT ALPHA"/>
    <property type="match status" value="1"/>
</dbReference>
<dbReference type="PANTHER" id="PTHR23036">
    <property type="entry name" value="CYTOKINE RECEPTOR"/>
    <property type="match status" value="1"/>
</dbReference>
<dbReference type="Pfam" id="PF00041">
    <property type="entry name" value="fn3"/>
    <property type="match status" value="1"/>
</dbReference>
<dbReference type="SMART" id="SM00060">
    <property type="entry name" value="FN3"/>
    <property type="match status" value="1"/>
</dbReference>
<dbReference type="SMART" id="SM00409">
    <property type="entry name" value="IG"/>
    <property type="match status" value="1"/>
</dbReference>
<dbReference type="SMART" id="SM00408">
    <property type="entry name" value="IGc2"/>
    <property type="match status" value="1"/>
</dbReference>
<dbReference type="SUPFAM" id="SSF49265">
    <property type="entry name" value="Fibronectin type III"/>
    <property type="match status" value="2"/>
</dbReference>
<dbReference type="SUPFAM" id="SSF48726">
    <property type="entry name" value="Immunoglobulin"/>
    <property type="match status" value="1"/>
</dbReference>
<dbReference type="PROSITE" id="PS50853">
    <property type="entry name" value="FN3"/>
    <property type="match status" value="2"/>
</dbReference>
<dbReference type="PROSITE" id="PS01354">
    <property type="entry name" value="HEMATOPO_REC_L_F3"/>
    <property type="match status" value="1"/>
</dbReference>
<dbReference type="PROSITE" id="PS50835">
    <property type="entry name" value="IG_LIKE"/>
    <property type="match status" value="1"/>
</dbReference>
<keyword id="KW-1003">Cell membrane</keyword>
<keyword id="KW-1015">Disulfide bond</keyword>
<keyword id="KW-0325">Glycoprotein</keyword>
<keyword id="KW-0336">GPI-anchor</keyword>
<keyword id="KW-0393">Immunoglobulin domain</keyword>
<keyword id="KW-0449">Lipoprotein</keyword>
<keyword id="KW-0472">Membrane</keyword>
<keyword id="KW-0675">Receptor</keyword>
<keyword id="KW-1185">Reference proteome</keyword>
<keyword id="KW-0677">Repeat</keyword>
<keyword id="KW-0732">Signal</keyword>
<gene>
    <name type="primary">Cntfr</name>
</gene>
<name>CNTFR_RAT</name>
<evidence type="ECO:0000250" key="1">
    <source>
        <dbReference type="UniProtKB" id="P26992"/>
    </source>
</evidence>
<evidence type="ECO:0000255" key="2"/>
<evidence type="ECO:0000255" key="3">
    <source>
        <dbReference type="PROSITE-ProRule" id="PRU00114"/>
    </source>
</evidence>
<evidence type="ECO:0000255" key="4">
    <source>
        <dbReference type="PROSITE-ProRule" id="PRU00316"/>
    </source>
</evidence>
<evidence type="ECO:0000256" key="5">
    <source>
        <dbReference type="SAM" id="MobiDB-lite"/>
    </source>
</evidence>
<evidence type="ECO:0000305" key="6"/>
<accession>Q08406</accession>
<feature type="signal peptide" evidence="2">
    <location>
        <begin position="1"/>
        <end position="22"/>
    </location>
</feature>
<feature type="chain" id="PRO_0000010995" description="Ciliary neurotrophic factor receptor subunit alpha">
    <location>
        <begin position="23"/>
        <end position="342"/>
    </location>
</feature>
<feature type="propeptide" id="PRO_0000010996" description="Removed in mature form" evidence="2">
    <location>
        <begin position="343"/>
        <end position="372"/>
    </location>
</feature>
<feature type="domain" description="Ig-like C2-type">
    <location>
        <begin position="27"/>
        <end position="104"/>
    </location>
</feature>
<feature type="domain" description="Fibronectin type-III 1" evidence="4">
    <location>
        <begin position="108"/>
        <end position="205"/>
    </location>
</feature>
<feature type="domain" description="Fibronectin type-III 2" evidence="4">
    <location>
        <begin position="206"/>
        <end position="306"/>
    </location>
</feature>
<feature type="region of interest" description="Disordered" evidence="5">
    <location>
        <begin position="301"/>
        <end position="339"/>
    </location>
</feature>
<feature type="short sequence motif" description="WSXWS motif">
    <location>
        <begin position="290"/>
        <end position="294"/>
    </location>
</feature>
<feature type="compositionally biased region" description="Low complexity" evidence="5">
    <location>
        <begin position="311"/>
        <end position="326"/>
    </location>
</feature>
<feature type="lipid moiety-binding region" description="GPI-anchor amidated serine" evidence="2">
    <location>
        <position position="342"/>
    </location>
</feature>
<feature type="glycosylation site" description="N-linked (GlcNAc...) asparagine" evidence="2">
    <location>
        <position position="60"/>
    </location>
</feature>
<feature type="glycosylation site" description="N-linked (GlcNAc...) asparagine" evidence="2">
    <location>
        <position position="70"/>
    </location>
</feature>
<feature type="glycosylation site" description="N-linked (GlcNAc...) asparagine" evidence="2">
    <location>
        <position position="142"/>
    </location>
</feature>
<feature type="glycosylation site" description="N-linked (GlcNAc...) asparagine" evidence="2">
    <location>
        <position position="190"/>
    </location>
</feature>
<feature type="glycosylation site" description="N-linked (GlcNAc...) asparagine" evidence="2">
    <location>
        <position position="261"/>
    </location>
</feature>
<feature type="disulfide bond" evidence="3">
    <location>
        <begin position="46"/>
        <end position="89"/>
    </location>
</feature>
<feature type="sequence conflict" description="In Ref. 2; AAB25918." evidence="6" ref="2">
    <original>N</original>
    <variation>D</variation>
    <location>
        <position position="261"/>
    </location>
</feature>